<reference key="1">
    <citation type="journal article" date="2003" name="Nature">
        <title>Genome sequence of Bacillus cereus and comparative analysis with Bacillus anthracis.</title>
        <authorList>
            <person name="Ivanova N."/>
            <person name="Sorokin A."/>
            <person name="Anderson I."/>
            <person name="Galleron N."/>
            <person name="Candelon B."/>
            <person name="Kapatral V."/>
            <person name="Bhattacharyya A."/>
            <person name="Reznik G."/>
            <person name="Mikhailova N."/>
            <person name="Lapidus A."/>
            <person name="Chu L."/>
            <person name="Mazur M."/>
            <person name="Goltsman E."/>
            <person name="Larsen N."/>
            <person name="D'Souza M."/>
            <person name="Walunas T."/>
            <person name="Grechkin Y."/>
            <person name="Pusch G."/>
            <person name="Haselkorn R."/>
            <person name="Fonstein M."/>
            <person name="Ehrlich S.D."/>
            <person name="Overbeek R."/>
            <person name="Kyrpides N.C."/>
        </authorList>
    </citation>
    <scope>NUCLEOTIDE SEQUENCE [LARGE SCALE GENOMIC DNA]</scope>
    <source>
        <strain>ATCC 14579 / DSM 31 / CCUG 7414 / JCM 2152 / NBRC 15305 / NCIMB 9373 / NCTC 2599 / NRRL B-3711</strain>
    </source>
</reference>
<gene>
    <name evidence="1" type="primary">rpsQ</name>
    <name type="ordered locus">BC_0140</name>
</gene>
<protein>
    <recommendedName>
        <fullName evidence="1">Small ribosomal subunit protein uS17</fullName>
    </recommendedName>
    <alternativeName>
        <fullName evidence="2">30S ribosomal protein S17</fullName>
    </alternativeName>
</protein>
<proteinExistence type="inferred from homology"/>
<feature type="chain" id="PRO_0000233420" description="Small ribosomal subunit protein uS17">
    <location>
        <begin position="1"/>
        <end position="87"/>
    </location>
</feature>
<keyword id="KW-1185">Reference proteome</keyword>
<keyword id="KW-0687">Ribonucleoprotein</keyword>
<keyword id="KW-0689">Ribosomal protein</keyword>
<keyword id="KW-0694">RNA-binding</keyword>
<keyword id="KW-0699">rRNA-binding</keyword>
<comment type="function">
    <text evidence="1">One of the primary rRNA binding proteins, it binds specifically to the 5'-end of 16S ribosomal RNA.</text>
</comment>
<comment type="subunit">
    <text evidence="1">Part of the 30S ribosomal subunit.</text>
</comment>
<comment type="similarity">
    <text evidence="1">Belongs to the universal ribosomal protein uS17 family.</text>
</comment>
<name>RS17_BACCR</name>
<accession>Q81J33</accession>
<dbReference type="EMBL" id="AE016877">
    <property type="protein sequence ID" value="AAP07221.1"/>
    <property type="molecule type" value="Genomic_DNA"/>
</dbReference>
<dbReference type="RefSeq" id="NP_830020.1">
    <property type="nucleotide sequence ID" value="NC_004722.1"/>
</dbReference>
<dbReference type="RefSeq" id="WP_000004105.1">
    <property type="nucleotide sequence ID" value="NC_004722.1"/>
</dbReference>
<dbReference type="SMR" id="Q81J33"/>
<dbReference type="STRING" id="226900.BC_0140"/>
<dbReference type="KEGG" id="bce:BC0140"/>
<dbReference type="PATRIC" id="fig|226900.8.peg.141"/>
<dbReference type="HOGENOM" id="CLU_073626_1_0_9"/>
<dbReference type="Proteomes" id="UP000001417">
    <property type="component" value="Chromosome"/>
</dbReference>
<dbReference type="GO" id="GO:0022627">
    <property type="term" value="C:cytosolic small ribosomal subunit"/>
    <property type="evidence" value="ECO:0000318"/>
    <property type="project" value="GO_Central"/>
</dbReference>
<dbReference type="GO" id="GO:0019843">
    <property type="term" value="F:rRNA binding"/>
    <property type="evidence" value="ECO:0007669"/>
    <property type="project" value="UniProtKB-UniRule"/>
</dbReference>
<dbReference type="GO" id="GO:0003735">
    <property type="term" value="F:structural constituent of ribosome"/>
    <property type="evidence" value="ECO:0000318"/>
    <property type="project" value="GO_Central"/>
</dbReference>
<dbReference type="GO" id="GO:0006412">
    <property type="term" value="P:translation"/>
    <property type="evidence" value="ECO:0007669"/>
    <property type="project" value="UniProtKB-UniRule"/>
</dbReference>
<dbReference type="CDD" id="cd00364">
    <property type="entry name" value="Ribosomal_uS17"/>
    <property type="match status" value="1"/>
</dbReference>
<dbReference type="FunFam" id="2.40.50.140:FF:000026">
    <property type="entry name" value="30S ribosomal protein S17"/>
    <property type="match status" value="1"/>
</dbReference>
<dbReference type="Gene3D" id="2.40.50.140">
    <property type="entry name" value="Nucleic acid-binding proteins"/>
    <property type="match status" value="1"/>
</dbReference>
<dbReference type="HAMAP" id="MF_01345_B">
    <property type="entry name" value="Ribosomal_uS17_B"/>
    <property type="match status" value="1"/>
</dbReference>
<dbReference type="InterPro" id="IPR012340">
    <property type="entry name" value="NA-bd_OB-fold"/>
</dbReference>
<dbReference type="InterPro" id="IPR000266">
    <property type="entry name" value="Ribosomal_uS17"/>
</dbReference>
<dbReference type="InterPro" id="IPR019984">
    <property type="entry name" value="Ribosomal_uS17_bact/chlr"/>
</dbReference>
<dbReference type="InterPro" id="IPR019979">
    <property type="entry name" value="Ribosomal_uS17_CS"/>
</dbReference>
<dbReference type="NCBIfam" id="NF004123">
    <property type="entry name" value="PRK05610.1"/>
    <property type="match status" value="1"/>
</dbReference>
<dbReference type="NCBIfam" id="TIGR03635">
    <property type="entry name" value="uS17_bact"/>
    <property type="match status" value="1"/>
</dbReference>
<dbReference type="PANTHER" id="PTHR10744">
    <property type="entry name" value="40S RIBOSOMAL PROTEIN S11 FAMILY MEMBER"/>
    <property type="match status" value="1"/>
</dbReference>
<dbReference type="PANTHER" id="PTHR10744:SF1">
    <property type="entry name" value="SMALL RIBOSOMAL SUBUNIT PROTEIN US17M"/>
    <property type="match status" value="1"/>
</dbReference>
<dbReference type="Pfam" id="PF00366">
    <property type="entry name" value="Ribosomal_S17"/>
    <property type="match status" value="1"/>
</dbReference>
<dbReference type="PRINTS" id="PR00973">
    <property type="entry name" value="RIBOSOMALS17"/>
</dbReference>
<dbReference type="SUPFAM" id="SSF50249">
    <property type="entry name" value="Nucleic acid-binding proteins"/>
    <property type="match status" value="1"/>
</dbReference>
<dbReference type="PROSITE" id="PS00056">
    <property type="entry name" value="RIBOSOMAL_S17"/>
    <property type="match status" value="1"/>
</dbReference>
<organism>
    <name type="scientific">Bacillus cereus (strain ATCC 14579 / DSM 31 / CCUG 7414 / JCM 2152 / NBRC 15305 / NCIMB 9373 / NCTC 2599 / NRRL B-3711)</name>
    <dbReference type="NCBI Taxonomy" id="226900"/>
    <lineage>
        <taxon>Bacteria</taxon>
        <taxon>Bacillati</taxon>
        <taxon>Bacillota</taxon>
        <taxon>Bacilli</taxon>
        <taxon>Bacillales</taxon>
        <taxon>Bacillaceae</taxon>
        <taxon>Bacillus</taxon>
        <taxon>Bacillus cereus group</taxon>
    </lineage>
</organism>
<evidence type="ECO:0000255" key="1">
    <source>
        <dbReference type="HAMAP-Rule" id="MF_01345"/>
    </source>
</evidence>
<evidence type="ECO:0000305" key="2"/>
<sequence>MSERNQRKVYTGRVVSDKMDKTITVLVETYKTHSLYGKRVKYSKKYKAHDEQNQAKLGDIVKIMETRPLSATKRFRLDEIVEEAVII</sequence>